<keyword id="KW-0067">ATP-binding</keyword>
<keyword id="KW-0143">Chaperone</keyword>
<keyword id="KW-0963">Cytoplasm</keyword>
<keyword id="KW-0547">Nucleotide-binding</keyword>
<keyword id="KW-1185">Reference proteome</keyword>
<keyword id="KW-0346">Stress response</keyword>
<dbReference type="EMBL" id="X63195">
    <property type="protein sequence ID" value="CAA44877.1"/>
    <property type="molecule type" value="mRNA"/>
</dbReference>
<dbReference type="PIR" id="S18865">
    <property type="entry name" value="S18865"/>
</dbReference>
<dbReference type="SMR" id="P36182"/>
<dbReference type="STRING" id="4097.P36182"/>
<dbReference type="PaxDb" id="4097-P36182"/>
<dbReference type="ProMEX" id="P36182"/>
<dbReference type="Proteomes" id="UP000084051">
    <property type="component" value="Unplaced"/>
</dbReference>
<dbReference type="GO" id="GO:0005829">
    <property type="term" value="C:cytosol"/>
    <property type="evidence" value="ECO:0000318"/>
    <property type="project" value="GO_Central"/>
</dbReference>
<dbReference type="GO" id="GO:0048471">
    <property type="term" value="C:perinuclear region of cytoplasm"/>
    <property type="evidence" value="ECO:0000318"/>
    <property type="project" value="GO_Central"/>
</dbReference>
<dbReference type="GO" id="GO:0005886">
    <property type="term" value="C:plasma membrane"/>
    <property type="evidence" value="ECO:0000318"/>
    <property type="project" value="GO_Central"/>
</dbReference>
<dbReference type="GO" id="GO:0032991">
    <property type="term" value="C:protein-containing complex"/>
    <property type="evidence" value="ECO:0000318"/>
    <property type="project" value="GO_Central"/>
</dbReference>
<dbReference type="GO" id="GO:0005524">
    <property type="term" value="F:ATP binding"/>
    <property type="evidence" value="ECO:0000318"/>
    <property type="project" value="GO_Central"/>
</dbReference>
<dbReference type="GO" id="GO:0016887">
    <property type="term" value="F:ATP hydrolysis activity"/>
    <property type="evidence" value="ECO:0000318"/>
    <property type="project" value="GO_Central"/>
</dbReference>
<dbReference type="GO" id="GO:0140662">
    <property type="term" value="F:ATP-dependent protein folding chaperone"/>
    <property type="evidence" value="ECO:0007669"/>
    <property type="project" value="InterPro"/>
</dbReference>
<dbReference type="GO" id="GO:0051082">
    <property type="term" value="F:unfolded protein binding"/>
    <property type="evidence" value="ECO:0000318"/>
    <property type="project" value="GO_Central"/>
</dbReference>
<dbReference type="GO" id="GO:0034605">
    <property type="term" value="P:cellular response to heat"/>
    <property type="evidence" value="ECO:0000318"/>
    <property type="project" value="GO_Central"/>
</dbReference>
<dbReference type="GO" id="GO:0006457">
    <property type="term" value="P:protein folding"/>
    <property type="evidence" value="ECO:0000318"/>
    <property type="project" value="GO_Central"/>
</dbReference>
<dbReference type="GO" id="GO:0050821">
    <property type="term" value="P:protein stabilization"/>
    <property type="evidence" value="ECO:0000318"/>
    <property type="project" value="GO_Central"/>
</dbReference>
<dbReference type="FunFam" id="1.20.120.790:FF:000001">
    <property type="entry name" value="Heat shock protein 90 alpha"/>
    <property type="match status" value="1"/>
</dbReference>
<dbReference type="FunFam" id="3.30.230.80:FF:000001">
    <property type="entry name" value="Heat shock protein 90 alpha"/>
    <property type="match status" value="1"/>
</dbReference>
<dbReference type="FunFam" id="3.40.50.11260:FF:000001">
    <property type="entry name" value="Heat shock protein 90 alpha"/>
    <property type="match status" value="1"/>
</dbReference>
<dbReference type="Gene3D" id="3.30.230.80">
    <property type="match status" value="1"/>
</dbReference>
<dbReference type="Gene3D" id="3.40.50.11260">
    <property type="match status" value="1"/>
</dbReference>
<dbReference type="Gene3D" id="1.20.120.790">
    <property type="entry name" value="Heat shock protein 90, C-terminal domain"/>
    <property type="match status" value="1"/>
</dbReference>
<dbReference type="InterPro" id="IPR037196">
    <property type="entry name" value="HSP90_C"/>
</dbReference>
<dbReference type="InterPro" id="IPR001404">
    <property type="entry name" value="Hsp90_fam"/>
</dbReference>
<dbReference type="InterPro" id="IPR020568">
    <property type="entry name" value="Ribosomal_Su5_D2-typ_SF"/>
</dbReference>
<dbReference type="NCBIfam" id="NF003555">
    <property type="entry name" value="PRK05218.1"/>
    <property type="match status" value="1"/>
</dbReference>
<dbReference type="PANTHER" id="PTHR11528">
    <property type="entry name" value="HEAT SHOCK PROTEIN 90 FAMILY MEMBER"/>
    <property type="match status" value="1"/>
</dbReference>
<dbReference type="Pfam" id="PF00183">
    <property type="entry name" value="HSP90"/>
    <property type="match status" value="1"/>
</dbReference>
<dbReference type="PIRSF" id="PIRSF002583">
    <property type="entry name" value="Hsp90"/>
    <property type="match status" value="1"/>
</dbReference>
<dbReference type="SUPFAM" id="SSF110942">
    <property type="entry name" value="HSP90 C-terminal domain"/>
    <property type="match status" value="1"/>
</dbReference>
<dbReference type="SUPFAM" id="SSF54211">
    <property type="entry name" value="Ribosomal protein S5 domain 2-like"/>
    <property type="match status" value="1"/>
</dbReference>
<comment type="function">
    <text evidence="1">Molecular chaperone that promotes the maturation, structural maintenance and proper regulation of specific target proteins involved for instance in cell cycle control and signal transduction. Undergoes a functional cycle that is linked to its ATPase activity. This cycle probably induces conformational changes in the client proteins, thereby causing their activation. Interacts dynamically with various co-chaperones that modulate its substrate recognition, ATPase cycle and chaperone function (By similarity).</text>
</comment>
<comment type="subunit">
    <text evidence="1">Homodimer.</text>
</comment>
<comment type="subcellular location">
    <subcellularLocation>
        <location evidence="3">Cytoplasm</location>
    </subcellularLocation>
</comment>
<comment type="domain">
    <text evidence="1">The TPR repeat-binding motif mediates interaction with TPR repeat-containing proteins.</text>
</comment>
<comment type="similarity">
    <text evidence="3">Belongs to the heat shock protein 90 family.</text>
</comment>
<gene>
    <name type="primary">HSP82</name>
</gene>
<reference key="1">
    <citation type="submission" date="1991-11" db="EMBL/GenBank/DDBJ databases">
        <authorList>
            <person name="Severin K."/>
            <person name="Rottke R."/>
            <person name="Behrens H."/>
            <person name="Heller P."/>
            <person name="Schoeffl F."/>
        </authorList>
    </citation>
    <scope>NUCLEOTIDE SEQUENCE [MRNA]</scope>
    <source>
        <strain>cv. Samsun</strain>
    </source>
</reference>
<feature type="chain" id="PRO_0000062953" description="Heat shock protein 82">
    <location>
        <begin position="1" status="less than"/>
        <end position="499"/>
    </location>
</feature>
<feature type="region of interest" description="Disordered" evidence="2">
    <location>
        <begin position="15"/>
        <end position="51"/>
    </location>
</feature>
<feature type="region of interest" description="Disordered" evidence="2">
    <location>
        <begin position="474"/>
        <end position="499"/>
    </location>
</feature>
<feature type="short sequence motif" description="TPR repeat-binding">
    <location>
        <begin position="495"/>
        <end position="499"/>
    </location>
</feature>
<feature type="binding site" evidence="1">
    <location>
        <position position="172"/>
    </location>
    <ligand>
        <name>ATP</name>
        <dbReference type="ChEBI" id="CHEBI:30616"/>
    </ligand>
</feature>
<feature type="non-terminal residue">
    <location>
        <position position="1"/>
    </location>
</feature>
<proteinExistence type="evidence at transcript level"/>
<name>HSP82_TOBAC</name>
<accession>P36182</accession>
<protein>
    <recommendedName>
        <fullName>Heat shock protein 82</fullName>
    </recommendedName>
</protein>
<sequence length="499" mass="58021">EFISYPIYLWTEKTTEKEISDDEDDEPKKDEEGAVEEVDEDKEKEKGKKKKIKEVSHEWQLINKQKPIWLRKPEEITKDEYASFYKSLTNDWEEHLAVKHFSVEGQLEFKAILFVPKRAPFDLFDTRKKMNNIKLYVRRVFIMDNCEELIPEYLGFVKGVVDSDDLPLNISREMLQQNKILKVIRKNLVKKCIEMFNEIAENKEDYNKFYEAFSKNLKLGIHEDSQNRAKLADLLRYHSTKSGDEMTSLKDYVTRMKEGQKDIYYITGESKKAVENSPFLERLKKKGYEVLYMVDAIDEYAVGQLKEYDGKKLVSATKEGLKLDDDSEEEKKKKEEKKKSFENLCKIIKDILGDKVEKVVVSDRIVDSPCCLVTGEYGWTANMERIMKAQALRDSSMSSYMSSKKTMEINPDNGIMEELRKRAEADKNDKSVKDLVLLLFETALLTSGFSLDDPNTFAARIHRMLKLGLSIDEEEEAVEDADMPALEETGEESKMEEVD</sequence>
<evidence type="ECO:0000250" key="1"/>
<evidence type="ECO:0000256" key="2">
    <source>
        <dbReference type="SAM" id="MobiDB-lite"/>
    </source>
</evidence>
<evidence type="ECO:0000305" key="3"/>
<organism>
    <name type="scientific">Nicotiana tabacum</name>
    <name type="common">Common tobacco</name>
    <dbReference type="NCBI Taxonomy" id="4097"/>
    <lineage>
        <taxon>Eukaryota</taxon>
        <taxon>Viridiplantae</taxon>
        <taxon>Streptophyta</taxon>
        <taxon>Embryophyta</taxon>
        <taxon>Tracheophyta</taxon>
        <taxon>Spermatophyta</taxon>
        <taxon>Magnoliopsida</taxon>
        <taxon>eudicotyledons</taxon>
        <taxon>Gunneridae</taxon>
        <taxon>Pentapetalae</taxon>
        <taxon>asterids</taxon>
        <taxon>lamiids</taxon>
        <taxon>Solanales</taxon>
        <taxon>Solanaceae</taxon>
        <taxon>Nicotianoideae</taxon>
        <taxon>Nicotianeae</taxon>
        <taxon>Nicotiana</taxon>
    </lineage>
</organism>